<name>Y1161_HELHP</name>
<keyword id="KW-1003">Cell membrane</keyword>
<keyword id="KW-0472">Membrane</keyword>
<keyword id="KW-1185">Reference proteome</keyword>
<keyword id="KW-0812">Transmembrane</keyword>
<keyword id="KW-1133">Transmembrane helix</keyword>
<protein>
    <recommendedName>
        <fullName>UPF0324 membrane protein HH_1161</fullName>
    </recommendedName>
</protein>
<sequence length="345" mass="37502">MAYRFQGFLYGILFLAFFSLLSLFISATLTPFLSPLIIGILLGAALSPFYPKLNQHYDIQAGITFGAKKLLRLGIILYGSYITLGEIATLGLNGFLISLFIVAGVFIAAIFIGKMLKLDNEISLLVGIGSAVCGAAAILALESTLKTHPSKSSVALGFIVIFGLIGMILLPAIYYANILPLNDYQWGIFIGASLHEVANVVGAAAISPESQNVAIIVKMTRVVLLVPLLLIISYIIFKLNQKRVQNDTNIPNGDTHAKQNALYIPYFAFGFLGVIVLNSFIDFPPVVVESTQFASKICLVFAMVALGLQIDWQKFISFGAKTFALALILFIILMFGTYGLVYIMF</sequence>
<organism>
    <name type="scientific">Helicobacter hepaticus (strain ATCC 51449 / 3B1)</name>
    <dbReference type="NCBI Taxonomy" id="235279"/>
    <lineage>
        <taxon>Bacteria</taxon>
        <taxon>Pseudomonadati</taxon>
        <taxon>Campylobacterota</taxon>
        <taxon>Epsilonproteobacteria</taxon>
        <taxon>Campylobacterales</taxon>
        <taxon>Helicobacteraceae</taxon>
        <taxon>Helicobacter</taxon>
    </lineage>
</organism>
<reference key="1">
    <citation type="journal article" date="2003" name="Proc. Natl. Acad. Sci. U.S.A.">
        <title>The complete genome sequence of the carcinogenic bacterium Helicobacter hepaticus.</title>
        <authorList>
            <person name="Suerbaum S."/>
            <person name="Josenhans C."/>
            <person name="Sterzenbach T."/>
            <person name="Drescher B."/>
            <person name="Brandt P."/>
            <person name="Bell M."/>
            <person name="Droege M."/>
            <person name="Fartmann B."/>
            <person name="Fischer H.-P."/>
            <person name="Ge Z."/>
            <person name="Hoerster A."/>
            <person name="Holland R."/>
            <person name="Klein K."/>
            <person name="Koenig J."/>
            <person name="Macko L."/>
            <person name="Mendz G.L."/>
            <person name="Nyakatura G."/>
            <person name="Schauer D.B."/>
            <person name="Shen Z."/>
            <person name="Weber J."/>
            <person name="Frosch M."/>
            <person name="Fox J.G."/>
        </authorList>
    </citation>
    <scope>NUCLEOTIDE SEQUENCE [LARGE SCALE GENOMIC DNA]</scope>
    <source>
        <strain>ATCC 51449 / 3B1</strain>
    </source>
</reference>
<gene>
    <name type="ordered locus">HH_1161</name>
</gene>
<comment type="subcellular location">
    <subcellularLocation>
        <location evidence="2">Cell membrane</location>
        <topology evidence="2">Multi-pass membrane protein</topology>
    </subcellularLocation>
</comment>
<comment type="similarity">
    <text evidence="2">Belongs to the UPF0324 family.</text>
</comment>
<dbReference type="EMBL" id="AE017125">
    <property type="protein sequence ID" value="AAP77758.1"/>
    <property type="molecule type" value="Genomic_DNA"/>
</dbReference>
<dbReference type="RefSeq" id="WP_011116001.1">
    <property type="nucleotide sequence ID" value="NC_004917.1"/>
</dbReference>
<dbReference type="STRING" id="235279.HH_1161"/>
<dbReference type="KEGG" id="hhe:HH_1161"/>
<dbReference type="eggNOG" id="COG2855">
    <property type="taxonomic scope" value="Bacteria"/>
</dbReference>
<dbReference type="HOGENOM" id="CLU_033541_0_0_7"/>
<dbReference type="OrthoDB" id="9805703at2"/>
<dbReference type="Proteomes" id="UP000002495">
    <property type="component" value="Chromosome"/>
</dbReference>
<dbReference type="GO" id="GO:0005886">
    <property type="term" value="C:plasma membrane"/>
    <property type="evidence" value="ECO:0007669"/>
    <property type="project" value="UniProtKB-SubCell"/>
</dbReference>
<dbReference type="InterPro" id="IPR018383">
    <property type="entry name" value="UPF0324_pro"/>
</dbReference>
<dbReference type="PANTHER" id="PTHR30106">
    <property type="entry name" value="INNER MEMBRANE PROTEIN YEIH-RELATED"/>
    <property type="match status" value="1"/>
</dbReference>
<dbReference type="PANTHER" id="PTHR30106:SF2">
    <property type="entry name" value="UPF0324 INNER MEMBRANE PROTEIN YEIH"/>
    <property type="match status" value="1"/>
</dbReference>
<dbReference type="Pfam" id="PF03601">
    <property type="entry name" value="Cons_hypoth698"/>
    <property type="match status" value="1"/>
</dbReference>
<proteinExistence type="inferred from homology"/>
<accession>Q7VH06</accession>
<feature type="chain" id="PRO_0000157421" description="UPF0324 membrane protein HH_1161">
    <location>
        <begin position="1"/>
        <end position="345"/>
    </location>
</feature>
<feature type="transmembrane region" description="Helical" evidence="1">
    <location>
        <begin position="7"/>
        <end position="29"/>
    </location>
</feature>
<feature type="transmembrane region" description="Helical" evidence="1">
    <location>
        <begin position="33"/>
        <end position="50"/>
    </location>
</feature>
<feature type="transmembrane region" description="Helical" evidence="1">
    <location>
        <begin position="90"/>
        <end position="112"/>
    </location>
</feature>
<feature type="transmembrane region" description="Helical" evidence="1">
    <location>
        <begin position="122"/>
        <end position="141"/>
    </location>
</feature>
<feature type="transmembrane region" description="Helical" evidence="1">
    <location>
        <begin position="154"/>
        <end position="176"/>
    </location>
</feature>
<feature type="transmembrane region" description="Helical" evidence="1">
    <location>
        <begin position="186"/>
        <end position="208"/>
    </location>
</feature>
<feature type="transmembrane region" description="Helical" evidence="1">
    <location>
        <begin position="215"/>
        <end position="237"/>
    </location>
</feature>
<feature type="transmembrane region" description="Helical" evidence="1">
    <location>
        <begin position="262"/>
        <end position="281"/>
    </location>
</feature>
<feature type="transmembrane region" description="Helical" evidence="1">
    <location>
        <begin position="293"/>
        <end position="312"/>
    </location>
</feature>
<feature type="transmembrane region" description="Helical" evidence="1">
    <location>
        <begin position="322"/>
        <end position="344"/>
    </location>
</feature>
<evidence type="ECO:0000255" key="1"/>
<evidence type="ECO:0000305" key="2"/>